<sequence>MITMIRRFIRLDAAAGMMLMMATVLAIALANWSVTAAGYQQFLMIPVEMRFGALEINKNLLLWINDALMAIFFLLIGLEVKRELVEGTLASRQQAMLPLAAAVGGMVFPALLFLLFNANDDVTRAGWAIPAATDIAFAIGVLTLLGKRVPAGLKVFLLALAIIDDLGAILIIALFYTQQVFWPALAGAVLAIAVLAYMNKLQVGKTSAYLLVGGVLWVCILKCGVHATLAGVIVGFFIPLRTSDGEPSPATSLEHGLQTWVAFLIVPLFAFANAGIVLQGIVLEKLFSPLSLGIAAGLLLGKPLGITLFSWLTIRLGYARLPVGVHFNQIVAVSVLCGIGFTMSIFITLLAFSGGDAELITYAKLGILLASGLAALLGYLALRGVLPALDKAV</sequence>
<protein>
    <recommendedName>
        <fullName evidence="1">Na(+)/H(+) antiporter NhaA</fullName>
    </recommendedName>
    <alternativeName>
        <fullName evidence="1">Sodium/proton antiporter NhaA</fullName>
    </alternativeName>
</protein>
<proteinExistence type="inferred from homology"/>
<comment type="function">
    <text evidence="1">Na(+)/H(+) antiporter that extrudes sodium in exchange for external protons.</text>
</comment>
<comment type="catalytic activity">
    <reaction evidence="1">
        <text>Na(+)(in) + 2 H(+)(out) = Na(+)(out) + 2 H(+)(in)</text>
        <dbReference type="Rhea" id="RHEA:29251"/>
        <dbReference type="ChEBI" id="CHEBI:15378"/>
        <dbReference type="ChEBI" id="CHEBI:29101"/>
    </reaction>
    <physiologicalReaction direction="left-to-right" evidence="1">
        <dbReference type="Rhea" id="RHEA:29252"/>
    </physiologicalReaction>
</comment>
<comment type="subcellular location">
    <subcellularLocation>
        <location evidence="1">Cell inner membrane</location>
        <topology evidence="1">Multi-pass membrane protein</topology>
    </subcellularLocation>
</comment>
<comment type="similarity">
    <text evidence="1">Belongs to the NhaA Na(+)/H(+) (TC 2.A.33) antiporter family.</text>
</comment>
<evidence type="ECO:0000255" key="1">
    <source>
        <dbReference type="HAMAP-Rule" id="MF_01844"/>
    </source>
</evidence>
<keyword id="KW-0050">Antiport</keyword>
<keyword id="KW-0997">Cell inner membrane</keyword>
<keyword id="KW-1003">Cell membrane</keyword>
<keyword id="KW-0406">Ion transport</keyword>
<keyword id="KW-0472">Membrane</keyword>
<keyword id="KW-1185">Reference proteome</keyword>
<keyword id="KW-0915">Sodium</keyword>
<keyword id="KW-0739">Sodium transport</keyword>
<keyword id="KW-0812">Transmembrane</keyword>
<keyword id="KW-1133">Transmembrane helix</keyword>
<keyword id="KW-0813">Transport</keyword>
<accession>Q6D0B9</accession>
<reference key="1">
    <citation type="journal article" date="2004" name="Proc. Natl. Acad. Sci. U.S.A.">
        <title>Genome sequence of the enterobacterial phytopathogen Erwinia carotovora subsp. atroseptica and characterization of virulence factors.</title>
        <authorList>
            <person name="Bell K.S."/>
            <person name="Sebaihia M."/>
            <person name="Pritchard L."/>
            <person name="Holden M.T.G."/>
            <person name="Hyman L.J."/>
            <person name="Holeva M.C."/>
            <person name="Thomson N.R."/>
            <person name="Bentley S.D."/>
            <person name="Churcher L.J.C."/>
            <person name="Mungall K."/>
            <person name="Atkin R."/>
            <person name="Bason N."/>
            <person name="Brooks K."/>
            <person name="Chillingworth T."/>
            <person name="Clark K."/>
            <person name="Doggett J."/>
            <person name="Fraser A."/>
            <person name="Hance Z."/>
            <person name="Hauser H."/>
            <person name="Jagels K."/>
            <person name="Moule S."/>
            <person name="Norbertczak H."/>
            <person name="Ormond D."/>
            <person name="Price C."/>
            <person name="Quail M.A."/>
            <person name="Sanders M."/>
            <person name="Walker D."/>
            <person name="Whitehead S."/>
            <person name="Salmond G.P.C."/>
            <person name="Birch P.R.J."/>
            <person name="Parkhill J."/>
            <person name="Toth I.K."/>
        </authorList>
    </citation>
    <scope>NUCLEOTIDE SEQUENCE [LARGE SCALE GENOMIC DNA]</scope>
    <source>
        <strain>SCRI 1043 / ATCC BAA-672</strain>
    </source>
</reference>
<dbReference type="EMBL" id="BX950851">
    <property type="protein sequence ID" value="CAG76778.1"/>
    <property type="molecule type" value="Genomic_DNA"/>
</dbReference>
<dbReference type="RefSeq" id="WP_011095378.1">
    <property type="nucleotide sequence ID" value="NC_004547.2"/>
</dbReference>
<dbReference type="SMR" id="Q6D0B9"/>
<dbReference type="STRING" id="218491.ECA3880"/>
<dbReference type="KEGG" id="eca:ECA3880"/>
<dbReference type="PATRIC" id="fig|218491.5.peg.3937"/>
<dbReference type="eggNOG" id="COG3004">
    <property type="taxonomic scope" value="Bacteria"/>
</dbReference>
<dbReference type="HOGENOM" id="CLU_015803_1_0_6"/>
<dbReference type="OrthoDB" id="9808135at2"/>
<dbReference type="Proteomes" id="UP000007966">
    <property type="component" value="Chromosome"/>
</dbReference>
<dbReference type="GO" id="GO:0005886">
    <property type="term" value="C:plasma membrane"/>
    <property type="evidence" value="ECO:0007669"/>
    <property type="project" value="UniProtKB-SubCell"/>
</dbReference>
<dbReference type="GO" id="GO:0015385">
    <property type="term" value="F:sodium:proton antiporter activity"/>
    <property type="evidence" value="ECO:0007669"/>
    <property type="project" value="TreeGrafter"/>
</dbReference>
<dbReference type="GO" id="GO:0006885">
    <property type="term" value="P:regulation of pH"/>
    <property type="evidence" value="ECO:0007669"/>
    <property type="project" value="InterPro"/>
</dbReference>
<dbReference type="Gene3D" id="1.20.1530.10">
    <property type="entry name" value="Na+/H+ antiporter like domain"/>
    <property type="match status" value="1"/>
</dbReference>
<dbReference type="HAMAP" id="MF_01844">
    <property type="entry name" value="NhaA"/>
    <property type="match status" value="1"/>
</dbReference>
<dbReference type="InterPro" id="IPR023171">
    <property type="entry name" value="Na/H_antiporter_dom_sf"/>
</dbReference>
<dbReference type="InterPro" id="IPR004670">
    <property type="entry name" value="NhaA"/>
</dbReference>
<dbReference type="NCBIfam" id="TIGR00773">
    <property type="entry name" value="NhaA"/>
    <property type="match status" value="1"/>
</dbReference>
<dbReference type="NCBIfam" id="NF007111">
    <property type="entry name" value="PRK09560.1"/>
    <property type="match status" value="1"/>
</dbReference>
<dbReference type="NCBIfam" id="NF007112">
    <property type="entry name" value="PRK09561.1"/>
    <property type="match status" value="1"/>
</dbReference>
<dbReference type="PANTHER" id="PTHR30341:SF0">
    <property type="entry name" value="NA(+)_H(+) ANTIPORTER NHAA"/>
    <property type="match status" value="1"/>
</dbReference>
<dbReference type="PANTHER" id="PTHR30341">
    <property type="entry name" value="SODIUM ION/PROTON ANTIPORTER NHAA-RELATED"/>
    <property type="match status" value="1"/>
</dbReference>
<dbReference type="Pfam" id="PF06965">
    <property type="entry name" value="Na_H_antiport_1"/>
    <property type="match status" value="1"/>
</dbReference>
<feature type="chain" id="PRO_0000334281" description="Na(+)/H(+) antiporter NhaA">
    <location>
        <begin position="1"/>
        <end position="393"/>
    </location>
</feature>
<feature type="transmembrane region" description="Helical" evidence="1">
    <location>
        <begin position="14"/>
        <end position="34"/>
    </location>
</feature>
<feature type="transmembrane region" description="Helical" evidence="1">
    <location>
        <begin position="60"/>
        <end position="80"/>
    </location>
</feature>
<feature type="transmembrane region" description="Helical" evidence="1">
    <location>
        <begin position="96"/>
        <end position="116"/>
    </location>
</feature>
<feature type="transmembrane region" description="Helical" evidence="1">
    <location>
        <begin position="125"/>
        <end position="145"/>
    </location>
</feature>
<feature type="transmembrane region" description="Helical" evidence="1">
    <location>
        <begin position="155"/>
        <end position="175"/>
    </location>
</feature>
<feature type="transmembrane region" description="Helical" evidence="1">
    <location>
        <begin position="179"/>
        <end position="199"/>
    </location>
</feature>
<feature type="transmembrane region" description="Helical" evidence="1">
    <location>
        <begin position="218"/>
        <end position="238"/>
    </location>
</feature>
<feature type="transmembrane region" description="Helical" evidence="1">
    <location>
        <begin position="263"/>
        <end position="283"/>
    </location>
</feature>
<feature type="transmembrane region" description="Helical" evidence="1">
    <location>
        <begin position="292"/>
        <end position="312"/>
    </location>
</feature>
<feature type="transmembrane region" description="Helical" evidence="1">
    <location>
        <begin position="330"/>
        <end position="350"/>
    </location>
</feature>
<feature type="transmembrane region" description="Helical" evidence="1">
    <location>
        <begin position="362"/>
        <end position="382"/>
    </location>
</feature>
<name>NHAA_PECAS</name>
<organism>
    <name type="scientific">Pectobacterium atrosepticum (strain SCRI 1043 / ATCC BAA-672)</name>
    <name type="common">Erwinia carotovora subsp. atroseptica</name>
    <dbReference type="NCBI Taxonomy" id="218491"/>
    <lineage>
        <taxon>Bacteria</taxon>
        <taxon>Pseudomonadati</taxon>
        <taxon>Pseudomonadota</taxon>
        <taxon>Gammaproteobacteria</taxon>
        <taxon>Enterobacterales</taxon>
        <taxon>Pectobacteriaceae</taxon>
        <taxon>Pectobacterium</taxon>
    </lineage>
</organism>
<gene>
    <name evidence="1" type="primary">nhaA</name>
    <name type="ordered locus">ECA3880</name>
</gene>